<dbReference type="EMBL" id="D11394">
    <property type="protein sequence ID" value="BAA01990.1"/>
    <property type="molecule type" value="Genomic_DNA"/>
</dbReference>
<dbReference type="EMBL" id="X62818">
    <property type="protein sequence ID" value="CAA44630.1"/>
    <property type="molecule type" value="mRNA"/>
</dbReference>
<dbReference type="EMBL" id="U15108">
    <property type="protein sequence ID" value="AAA50250.1"/>
    <property type="molecule type" value="mRNA"/>
</dbReference>
<dbReference type="EMBL" id="AC011436">
    <property type="protein sequence ID" value="AAF14034.1"/>
    <property type="molecule type" value="Genomic_DNA"/>
</dbReference>
<dbReference type="EMBL" id="CP002686">
    <property type="protein sequence ID" value="AEE74760.1"/>
    <property type="molecule type" value="Genomic_DNA"/>
</dbReference>
<dbReference type="EMBL" id="CP002686">
    <property type="protein sequence ID" value="ANM65194.1"/>
    <property type="molecule type" value="Genomic_DNA"/>
</dbReference>
<dbReference type="EMBL" id="AY037263">
    <property type="protein sequence ID" value="AAK59864.1"/>
    <property type="molecule type" value="mRNA"/>
</dbReference>
<dbReference type="EMBL" id="AY077669">
    <property type="protein sequence ID" value="AAL76147.1"/>
    <property type="molecule type" value="mRNA"/>
</dbReference>
<dbReference type="EMBL" id="Z26416">
    <property type="protein sequence ID" value="CAA81248.1"/>
    <property type="molecule type" value="mRNA"/>
</dbReference>
<dbReference type="PIR" id="S18069">
    <property type="entry name" value="SMMUL"/>
</dbReference>
<dbReference type="PIR" id="S57861">
    <property type="entry name" value="S57861"/>
</dbReference>
<dbReference type="RefSeq" id="NP_001327181.1">
    <property type="nucleotide sequence ID" value="NM_001337815.1"/>
</dbReference>
<dbReference type="RefSeq" id="NP_187550.1">
    <property type="nucleotide sequence ID" value="NM_111773.4"/>
</dbReference>
<dbReference type="BioGRID" id="5432">
    <property type="interactions" value="4"/>
</dbReference>
<dbReference type="FunCoup" id="P25860">
    <property type="interactions" value="97"/>
</dbReference>
<dbReference type="STRING" id="3702.P25860"/>
<dbReference type="PaxDb" id="3702-AT3G09390.1"/>
<dbReference type="ProteomicsDB" id="250897"/>
<dbReference type="EnsemblPlants" id="AT3G09390.1">
    <property type="protein sequence ID" value="AT3G09390.1"/>
    <property type="gene ID" value="AT3G09390"/>
</dbReference>
<dbReference type="EnsemblPlants" id="AT3G09390.2">
    <property type="protein sequence ID" value="AT3G09390.2"/>
    <property type="gene ID" value="AT3G09390"/>
</dbReference>
<dbReference type="GeneID" id="820098"/>
<dbReference type="Gramene" id="AT3G09390.1">
    <property type="protein sequence ID" value="AT3G09390.1"/>
    <property type="gene ID" value="AT3G09390"/>
</dbReference>
<dbReference type="Gramene" id="AT3G09390.2">
    <property type="protein sequence ID" value="AT3G09390.2"/>
    <property type="gene ID" value="AT3G09390"/>
</dbReference>
<dbReference type="KEGG" id="ath:AT3G09390"/>
<dbReference type="Araport" id="AT3G09390"/>
<dbReference type="TAIR" id="AT3G09390">
    <property type="gene designation" value="MT2A"/>
</dbReference>
<dbReference type="eggNOG" id="KOG4738">
    <property type="taxonomic scope" value="Eukaryota"/>
</dbReference>
<dbReference type="HOGENOM" id="CLU_161105_1_0_1"/>
<dbReference type="InParanoid" id="P25860"/>
<dbReference type="OMA" id="LEKMSCC"/>
<dbReference type="OrthoDB" id="1111048at2759"/>
<dbReference type="PhylomeDB" id="P25860"/>
<dbReference type="PRO" id="PR:P25860"/>
<dbReference type="Proteomes" id="UP000006548">
    <property type="component" value="Chromosome 3"/>
</dbReference>
<dbReference type="ExpressionAtlas" id="P25860">
    <property type="expression patterns" value="baseline and differential"/>
</dbReference>
<dbReference type="GO" id="GO:0005507">
    <property type="term" value="F:copper ion binding"/>
    <property type="evidence" value="ECO:0000314"/>
    <property type="project" value="TAIR"/>
</dbReference>
<dbReference type="GO" id="GO:0006878">
    <property type="term" value="P:intracellular copper ion homeostasis"/>
    <property type="evidence" value="ECO:0000250"/>
    <property type="project" value="TAIR"/>
</dbReference>
<dbReference type="InterPro" id="IPR000347">
    <property type="entry name" value="Metalthion_15p"/>
</dbReference>
<dbReference type="PANTHER" id="PTHR33543">
    <property type="entry name" value="METALLOTHIONEIN-LIKE PROTEIN 2A"/>
    <property type="match status" value="1"/>
</dbReference>
<dbReference type="PANTHER" id="PTHR33543:SF36">
    <property type="entry name" value="METALLOTHIONEIN-LIKE PROTEIN 2A"/>
    <property type="match status" value="1"/>
</dbReference>
<dbReference type="Pfam" id="PF01439">
    <property type="entry name" value="Metallothio_2"/>
    <property type="match status" value="1"/>
</dbReference>
<evidence type="ECO:0000269" key="1">
    <source>
    </source>
</evidence>
<evidence type="ECO:0000269" key="2">
    <source>
    </source>
</evidence>
<evidence type="ECO:0000269" key="3">
    <source>
    </source>
</evidence>
<evidence type="ECO:0000269" key="4">
    <source ref="8"/>
</evidence>
<evidence type="ECO:0000305" key="5"/>
<feature type="chain" id="PRO_0000197386" description="Metallothionein-like protein 2A">
    <location>
        <begin position="1"/>
        <end position="81"/>
    </location>
</feature>
<feature type="sequence conflict" description="In Ref. 1; BAA01990/CAA44630." evidence="5" ref="1">
    <original>N</original>
    <variation>S</variation>
    <location>
        <position position="64"/>
    </location>
</feature>
<protein>
    <recommendedName>
        <fullName>Metallothionein-like protein 2A</fullName>
        <shortName>MT-2A</shortName>
        <shortName>MT-K</shortName>
    </recommendedName>
    <alternativeName>
        <fullName>MT-1G</fullName>
    </alternativeName>
</protein>
<proteinExistence type="evidence at transcript level"/>
<accession>P25860</accession>
<accession>P43391</accession>
<name>MT2A_ARATH</name>
<gene>
    <name type="primary">MT2A</name>
    <name type="ordered locus">At3g09390</name>
    <name type="ORF">F3L24.28</name>
</gene>
<reference key="1">
    <citation type="submission" date="1991-10" db="EMBL/GenBank/DDBJ databases">
        <title>A. thaliana gene for metallothionein-like protein, complete cds.</title>
        <authorList>
            <person name="Takahashi K."/>
        </authorList>
    </citation>
    <scope>NUCLEOTIDE SEQUENCE [GENOMIC DNA / MRNA]</scope>
    <source>
        <strain>cv. Columbia</strain>
        <tissue>Leaf</tissue>
    </source>
</reference>
<reference key="2">
    <citation type="journal article" date="1995" name="DNA Seq.">
        <title>Transcripts of metallothionein genes in Arabidopsis thaliana.</title>
        <authorList>
            <person name="Yeh S.C."/>
            <person name="Hsieh H.M."/>
            <person name="Huang P.C."/>
        </authorList>
    </citation>
    <scope>NUCLEOTIDE SEQUENCE [MRNA]</scope>
    <source>
        <strain>cv. Columbia</strain>
    </source>
</reference>
<reference key="3">
    <citation type="journal article" date="1995" name="Mol. Gen. Genet.">
        <title>Structure, organization and expression of the metallothionein gene family in Arabidopsis.</title>
        <authorList>
            <person name="Zhou J."/>
            <person name="Goldsbrough P.B."/>
        </authorList>
    </citation>
    <scope>NUCLEOTIDE SEQUENCE [GENOMIC DNA]</scope>
    <scope>TISSUE SPECIFICITY</scope>
    <scope>INDUCTION</scope>
</reference>
<reference key="4">
    <citation type="journal article" date="2000" name="Nature">
        <title>Sequence and analysis of chromosome 3 of the plant Arabidopsis thaliana.</title>
        <authorList>
            <person name="Salanoubat M."/>
            <person name="Lemcke K."/>
            <person name="Rieger M."/>
            <person name="Ansorge W."/>
            <person name="Unseld M."/>
            <person name="Fartmann B."/>
            <person name="Valle G."/>
            <person name="Bloecker H."/>
            <person name="Perez-Alonso M."/>
            <person name="Obermaier B."/>
            <person name="Delseny M."/>
            <person name="Boutry M."/>
            <person name="Grivell L.A."/>
            <person name="Mache R."/>
            <person name="Puigdomenech P."/>
            <person name="De Simone V."/>
            <person name="Choisne N."/>
            <person name="Artiguenave F."/>
            <person name="Robert C."/>
            <person name="Brottier P."/>
            <person name="Wincker P."/>
            <person name="Cattolico L."/>
            <person name="Weissenbach J."/>
            <person name="Saurin W."/>
            <person name="Quetier F."/>
            <person name="Schaefer M."/>
            <person name="Mueller-Auer S."/>
            <person name="Gabel C."/>
            <person name="Fuchs M."/>
            <person name="Benes V."/>
            <person name="Wurmbach E."/>
            <person name="Drzonek H."/>
            <person name="Erfle H."/>
            <person name="Jordan N."/>
            <person name="Bangert S."/>
            <person name="Wiedelmann R."/>
            <person name="Kranz H."/>
            <person name="Voss H."/>
            <person name="Holland R."/>
            <person name="Brandt P."/>
            <person name="Nyakatura G."/>
            <person name="Vezzi A."/>
            <person name="D'Angelo M."/>
            <person name="Pallavicini A."/>
            <person name="Toppo S."/>
            <person name="Simionati B."/>
            <person name="Conrad A."/>
            <person name="Hornischer K."/>
            <person name="Kauer G."/>
            <person name="Loehnert T.-H."/>
            <person name="Nordsiek G."/>
            <person name="Reichelt J."/>
            <person name="Scharfe M."/>
            <person name="Schoen O."/>
            <person name="Bargues M."/>
            <person name="Terol J."/>
            <person name="Climent J."/>
            <person name="Navarro P."/>
            <person name="Collado C."/>
            <person name="Perez-Perez A."/>
            <person name="Ottenwaelder B."/>
            <person name="Duchemin D."/>
            <person name="Cooke R."/>
            <person name="Laudie M."/>
            <person name="Berger-Llauro C."/>
            <person name="Purnelle B."/>
            <person name="Masuy D."/>
            <person name="de Haan M."/>
            <person name="Maarse A.C."/>
            <person name="Alcaraz J.-P."/>
            <person name="Cottet A."/>
            <person name="Casacuberta E."/>
            <person name="Monfort A."/>
            <person name="Argiriou A."/>
            <person name="Flores M."/>
            <person name="Liguori R."/>
            <person name="Vitale D."/>
            <person name="Mannhaupt G."/>
            <person name="Haase D."/>
            <person name="Schoof H."/>
            <person name="Rudd S."/>
            <person name="Zaccaria P."/>
            <person name="Mewes H.-W."/>
            <person name="Mayer K.F.X."/>
            <person name="Kaul S."/>
            <person name="Town C.D."/>
            <person name="Koo H.L."/>
            <person name="Tallon L.J."/>
            <person name="Jenkins J."/>
            <person name="Rooney T."/>
            <person name="Rizzo M."/>
            <person name="Walts A."/>
            <person name="Utterback T."/>
            <person name="Fujii C.Y."/>
            <person name="Shea T.P."/>
            <person name="Creasy T.H."/>
            <person name="Haas B."/>
            <person name="Maiti R."/>
            <person name="Wu D."/>
            <person name="Peterson J."/>
            <person name="Van Aken S."/>
            <person name="Pai G."/>
            <person name="Militscher J."/>
            <person name="Sellers P."/>
            <person name="Gill J.E."/>
            <person name="Feldblyum T.V."/>
            <person name="Preuss D."/>
            <person name="Lin X."/>
            <person name="Nierman W.C."/>
            <person name="Salzberg S.L."/>
            <person name="White O."/>
            <person name="Venter J.C."/>
            <person name="Fraser C.M."/>
            <person name="Kaneko T."/>
            <person name="Nakamura Y."/>
            <person name="Sato S."/>
            <person name="Kato T."/>
            <person name="Asamizu E."/>
            <person name="Sasamoto S."/>
            <person name="Kimura T."/>
            <person name="Idesawa K."/>
            <person name="Kawashima K."/>
            <person name="Kishida Y."/>
            <person name="Kiyokawa C."/>
            <person name="Kohara M."/>
            <person name="Matsumoto M."/>
            <person name="Matsuno A."/>
            <person name="Muraki A."/>
            <person name="Nakayama S."/>
            <person name="Nakazaki N."/>
            <person name="Shinpo S."/>
            <person name="Takeuchi C."/>
            <person name="Wada T."/>
            <person name="Watanabe A."/>
            <person name="Yamada M."/>
            <person name="Yasuda M."/>
            <person name="Tabata S."/>
        </authorList>
    </citation>
    <scope>NUCLEOTIDE SEQUENCE [LARGE SCALE GENOMIC DNA]</scope>
    <source>
        <strain>cv. Columbia</strain>
    </source>
</reference>
<reference key="5">
    <citation type="journal article" date="2017" name="Plant J.">
        <title>Araport11: a complete reannotation of the Arabidopsis thaliana reference genome.</title>
        <authorList>
            <person name="Cheng C.Y."/>
            <person name="Krishnakumar V."/>
            <person name="Chan A.P."/>
            <person name="Thibaud-Nissen F."/>
            <person name="Schobel S."/>
            <person name="Town C.D."/>
        </authorList>
    </citation>
    <scope>GENOME REANNOTATION</scope>
    <source>
        <strain>cv. Columbia</strain>
    </source>
</reference>
<reference key="6">
    <citation type="journal article" date="2003" name="Science">
        <title>Empirical analysis of transcriptional activity in the Arabidopsis genome.</title>
        <authorList>
            <person name="Yamada K."/>
            <person name="Lim J."/>
            <person name="Dale J.M."/>
            <person name="Chen H."/>
            <person name="Shinn P."/>
            <person name="Palm C.J."/>
            <person name="Southwick A.M."/>
            <person name="Wu H.C."/>
            <person name="Kim C.J."/>
            <person name="Nguyen M."/>
            <person name="Pham P.K."/>
            <person name="Cheuk R.F."/>
            <person name="Karlin-Newmann G."/>
            <person name="Liu S.X."/>
            <person name="Lam B."/>
            <person name="Sakano H."/>
            <person name="Wu T."/>
            <person name="Yu G."/>
            <person name="Miranda M."/>
            <person name="Quach H.L."/>
            <person name="Tripp M."/>
            <person name="Chang C.H."/>
            <person name="Lee J.M."/>
            <person name="Toriumi M.J."/>
            <person name="Chan M.M."/>
            <person name="Tang C.C."/>
            <person name="Onodera C.S."/>
            <person name="Deng J.M."/>
            <person name="Akiyama K."/>
            <person name="Ansari Y."/>
            <person name="Arakawa T."/>
            <person name="Banh J."/>
            <person name="Banno F."/>
            <person name="Bowser L."/>
            <person name="Brooks S.Y."/>
            <person name="Carninci P."/>
            <person name="Chao Q."/>
            <person name="Choy N."/>
            <person name="Enju A."/>
            <person name="Goldsmith A.D."/>
            <person name="Gurjal M."/>
            <person name="Hansen N.F."/>
            <person name="Hayashizaki Y."/>
            <person name="Johnson-Hopson C."/>
            <person name="Hsuan V.W."/>
            <person name="Iida K."/>
            <person name="Karnes M."/>
            <person name="Khan S."/>
            <person name="Koesema E."/>
            <person name="Ishida J."/>
            <person name="Jiang P.X."/>
            <person name="Jones T."/>
            <person name="Kawai J."/>
            <person name="Kamiya A."/>
            <person name="Meyers C."/>
            <person name="Nakajima M."/>
            <person name="Narusaka M."/>
            <person name="Seki M."/>
            <person name="Sakurai T."/>
            <person name="Satou M."/>
            <person name="Tamse R."/>
            <person name="Vaysberg M."/>
            <person name="Wallender E.K."/>
            <person name="Wong C."/>
            <person name="Yamamura Y."/>
            <person name="Yuan S."/>
            <person name="Shinozaki K."/>
            <person name="Davis R.W."/>
            <person name="Theologis A."/>
            <person name="Ecker J.R."/>
        </authorList>
    </citation>
    <scope>NUCLEOTIDE SEQUENCE [LARGE SCALE MRNA]</scope>
    <source>
        <strain>cv. Columbia</strain>
    </source>
</reference>
<reference key="7">
    <citation type="journal article" date="1996" name="Plant J.">
        <title>Further progress towards a catalogue of all Arabidopsis genes: analysis of a set of 5000 non-redundant ESTs.</title>
        <authorList>
            <person name="Cooke R."/>
            <person name="Raynal M."/>
            <person name="Laudie M."/>
            <person name="Grellet F."/>
            <person name="Delseny M."/>
            <person name="Morris P.-C."/>
            <person name="Guerrier D."/>
            <person name="Giraudat J."/>
            <person name="Quigley F."/>
            <person name="Clabault G."/>
            <person name="Li Y.-F."/>
            <person name="Mache R."/>
            <person name="Krivitzky M."/>
            <person name="Gy I.J.-J."/>
            <person name="Kreis M."/>
            <person name="Lecharny A."/>
            <person name="Parmentier Y."/>
            <person name="Marbach J."/>
            <person name="Fleck J."/>
            <person name="Clement B."/>
            <person name="Philipps G."/>
            <person name="Herve C."/>
            <person name="Bardet C."/>
            <person name="Tremousaygue D."/>
            <person name="Lescure B."/>
            <person name="Lacomme C."/>
            <person name="Roby D."/>
            <person name="Jourjon M.-F."/>
            <person name="Chabrier P."/>
            <person name="Charpenteau J.-L."/>
            <person name="Desprez T."/>
            <person name="Amselem J."/>
            <person name="Chiapello H."/>
            <person name="Hoefte H."/>
        </authorList>
    </citation>
    <scope>NUCLEOTIDE SEQUENCE [LARGE SCALE MRNA] OF 17-81</scope>
    <source>
        <strain>cv. Columbia</strain>
    </source>
</reference>
<reference key="8">
    <citation type="journal article" date="2003" name="New Phytol.">
        <title>Characterization of the Arabidopsis metallothionein gene family: tissue-specific expression and induction during senescence and in response to copper.</title>
        <authorList>
            <person name="Guo W.J."/>
            <person name="Bundithya W."/>
            <person name="Goldsbrough P.B."/>
        </authorList>
    </citation>
    <scope>TISSUE SPECIFICITY</scope>
</reference>
<reference key="9">
    <citation type="journal article" date="2008" name="Plant Physiol.">
        <title>Examining the specific contributions of individual Arabidopsis metallothioneins to copper distribution and metal tolerance.</title>
        <authorList>
            <person name="Guo W.J."/>
            <person name="Meetam M."/>
            <person name="Goldsbrough P.B."/>
        </authorList>
    </citation>
    <scope>FUNCTION</scope>
</reference>
<reference key="10">
    <citation type="journal article" date="2014" name="New Phytol.">
        <title>Metallothionein deficiency impacts copper accumulation and redistribution in leaves and seeds of Arabidopsis.</title>
        <authorList>
            <person name="Benatti M.R."/>
            <person name="Yookongkaew N."/>
            <person name="Meetam M."/>
            <person name="Guo W.J."/>
            <person name="Punyasuk N."/>
            <person name="Abuqamar S."/>
            <person name="Goldsbrough P."/>
        </authorList>
    </citation>
    <scope>FUNCTION</scope>
</reference>
<comment type="function">
    <text evidence="1 2 5">Metallothioneins have a high content of cysteine residues that bind various heavy metals (Probable). Functions as a metal chelator of copper (Cu) and zinc (Zn) (PubMed:18287486). Plays a role in Cu homeostasis, specifically in the remobilization of Cu from senescing leaves. The mobilization of Cu from internal sources is important for seed development (PubMed:24635746).</text>
</comment>
<comment type="tissue specificity">
    <text evidence="3 4">Abundant in leaves, inflorescences and roots of mature plants. Also detected in roots of young plants, and in siliques (PubMed:7565594). Expressed in leaf mesophyll cells, filaments, stigma and tips of elongating lateral roots (Ref.8).</text>
</comment>
<comment type="induction">
    <text evidence="3">Strongly induced in seedlings by CuSO4.</text>
</comment>
<comment type="similarity">
    <text evidence="5">Belongs to the metallothionein superfamily. Type 15 family.</text>
</comment>
<keyword id="KW-0479">Metal-binding</keyword>
<keyword id="KW-0480">Metal-thiolate cluster</keyword>
<keyword id="KW-1185">Reference proteome</keyword>
<organism>
    <name type="scientific">Arabidopsis thaliana</name>
    <name type="common">Mouse-ear cress</name>
    <dbReference type="NCBI Taxonomy" id="3702"/>
    <lineage>
        <taxon>Eukaryota</taxon>
        <taxon>Viridiplantae</taxon>
        <taxon>Streptophyta</taxon>
        <taxon>Embryophyta</taxon>
        <taxon>Tracheophyta</taxon>
        <taxon>Spermatophyta</taxon>
        <taxon>Magnoliopsida</taxon>
        <taxon>eudicotyledons</taxon>
        <taxon>Gunneridae</taxon>
        <taxon>Pentapetalae</taxon>
        <taxon>rosids</taxon>
        <taxon>malvids</taxon>
        <taxon>Brassicales</taxon>
        <taxon>Brassicaceae</taxon>
        <taxon>Camelineae</taxon>
        <taxon>Arabidopsis</taxon>
    </lineage>
</organism>
<sequence length="81" mass="8163">MSCCGGNCGCGSGCKCGNGCGGCKMYPDLGFSGETTTTETFVLGVAPAMKNQYEASGESNNAENDACKCGSDCKCDPCTCK</sequence>